<organism>
    <name type="scientific">Drosophila melanogaster</name>
    <name type="common">Fruit fly</name>
    <dbReference type="NCBI Taxonomy" id="7227"/>
    <lineage>
        <taxon>Eukaryota</taxon>
        <taxon>Metazoa</taxon>
        <taxon>Ecdysozoa</taxon>
        <taxon>Arthropoda</taxon>
        <taxon>Hexapoda</taxon>
        <taxon>Insecta</taxon>
        <taxon>Pterygota</taxon>
        <taxon>Neoptera</taxon>
        <taxon>Endopterygota</taxon>
        <taxon>Diptera</taxon>
        <taxon>Brachycera</taxon>
        <taxon>Muscomorpha</taxon>
        <taxon>Ephydroidea</taxon>
        <taxon>Drosophilidae</taxon>
        <taxon>Drosophila</taxon>
        <taxon>Sophophora</taxon>
    </lineage>
</organism>
<comment type="catalytic activity">
    <reaction>
        <text>Random endo-hydrolysis of N-acetyl-beta-D-glucosaminide (1-&gt;4)-beta-linkages in chitin and chitodextrins.</text>
        <dbReference type="EC" id="3.2.1.14"/>
    </reaction>
</comment>
<comment type="similarity">
    <text evidence="6">Belongs to the glycosyl hydrolase 18 family. Chitinase class II subfamily.</text>
</comment>
<reference evidence="7 9" key="1">
    <citation type="journal article" date="2000" name="Science">
        <title>The genome sequence of Drosophila melanogaster.</title>
        <authorList>
            <person name="Adams M.D."/>
            <person name="Celniker S.E."/>
            <person name="Holt R.A."/>
            <person name="Evans C.A."/>
            <person name="Gocayne J.D."/>
            <person name="Amanatides P.G."/>
            <person name="Scherer S.E."/>
            <person name="Li P.W."/>
            <person name="Hoskins R.A."/>
            <person name="Galle R.F."/>
            <person name="George R.A."/>
            <person name="Lewis S.E."/>
            <person name="Richards S."/>
            <person name="Ashburner M."/>
            <person name="Henderson S.N."/>
            <person name="Sutton G.G."/>
            <person name="Wortman J.R."/>
            <person name="Yandell M.D."/>
            <person name="Zhang Q."/>
            <person name="Chen L.X."/>
            <person name="Brandon R.C."/>
            <person name="Rogers Y.-H.C."/>
            <person name="Blazej R.G."/>
            <person name="Champe M."/>
            <person name="Pfeiffer B.D."/>
            <person name="Wan K.H."/>
            <person name="Doyle C."/>
            <person name="Baxter E.G."/>
            <person name="Helt G."/>
            <person name="Nelson C.R."/>
            <person name="Miklos G.L.G."/>
            <person name="Abril J.F."/>
            <person name="Agbayani A."/>
            <person name="An H.-J."/>
            <person name="Andrews-Pfannkoch C."/>
            <person name="Baldwin D."/>
            <person name="Ballew R.M."/>
            <person name="Basu A."/>
            <person name="Baxendale J."/>
            <person name="Bayraktaroglu L."/>
            <person name="Beasley E.M."/>
            <person name="Beeson K.Y."/>
            <person name="Benos P.V."/>
            <person name="Berman B.P."/>
            <person name="Bhandari D."/>
            <person name="Bolshakov S."/>
            <person name="Borkova D."/>
            <person name="Botchan M.R."/>
            <person name="Bouck J."/>
            <person name="Brokstein P."/>
            <person name="Brottier P."/>
            <person name="Burtis K.C."/>
            <person name="Busam D.A."/>
            <person name="Butler H."/>
            <person name="Cadieu E."/>
            <person name="Center A."/>
            <person name="Chandra I."/>
            <person name="Cherry J.M."/>
            <person name="Cawley S."/>
            <person name="Dahlke C."/>
            <person name="Davenport L.B."/>
            <person name="Davies P."/>
            <person name="de Pablos B."/>
            <person name="Delcher A."/>
            <person name="Deng Z."/>
            <person name="Mays A.D."/>
            <person name="Dew I."/>
            <person name="Dietz S.M."/>
            <person name="Dodson K."/>
            <person name="Doup L.E."/>
            <person name="Downes M."/>
            <person name="Dugan-Rocha S."/>
            <person name="Dunkov B.C."/>
            <person name="Dunn P."/>
            <person name="Durbin K.J."/>
            <person name="Evangelista C.C."/>
            <person name="Ferraz C."/>
            <person name="Ferriera S."/>
            <person name="Fleischmann W."/>
            <person name="Fosler C."/>
            <person name="Gabrielian A.E."/>
            <person name="Garg N.S."/>
            <person name="Gelbart W.M."/>
            <person name="Glasser K."/>
            <person name="Glodek A."/>
            <person name="Gong F."/>
            <person name="Gorrell J.H."/>
            <person name="Gu Z."/>
            <person name="Guan P."/>
            <person name="Harris M."/>
            <person name="Harris N.L."/>
            <person name="Harvey D.A."/>
            <person name="Heiman T.J."/>
            <person name="Hernandez J.R."/>
            <person name="Houck J."/>
            <person name="Hostin D."/>
            <person name="Houston K.A."/>
            <person name="Howland T.J."/>
            <person name="Wei M.-H."/>
            <person name="Ibegwam C."/>
            <person name="Jalali M."/>
            <person name="Kalush F."/>
            <person name="Karpen G.H."/>
            <person name="Ke Z."/>
            <person name="Kennison J.A."/>
            <person name="Ketchum K.A."/>
            <person name="Kimmel B.E."/>
            <person name="Kodira C.D."/>
            <person name="Kraft C.L."/>
            <person name="Kravitz S."/>
            <person name="Kulp D."/>
            <person name="Lai Z."/>
            <person name="Lasko P."/>
            <person name="Lei Y."/>
            <person name="Levitsky A.A."/>
            <person name="Li J.H."/>
            <person name="Li Z."/>
            <person name="Liang Y."/>
            <person name="Lin X."/>
            <person name="Liu X."/>
            <person name="Mattei B."/>
            <person name="McIntosh T.C."/>
            <person name="McLeod M.P."/>
            <person name="McPherson D."/>
            <person name="Merkulov G."/>
            <person name="Milshina N.V."/>
            <person name="Mobarry C."/>
            <person name="Morris J."/>
            <person name="Moshrefi A."/>
            <person name="Mount S.M."/>
            <person name="Moy M."/>
            <person name="Murphy B."/>
            <person name="Murphy L."/>
            <person name="Muzny D.M."/>
            <person name="Nelson D.L."/>
            <person name="Nelson D.R."/>
            <person name="Nelson K.A."/>
            <person name="Nixon K."/>
            <person name="Nusskern D.R."/>
            <person name="Pacleb J.M."/>
            <person name="Palazzolo M."/>
            <person name="Pittman G.S."/>
            <person name="Pan S."/>
            <person name="Pollard J."/>
            <person name="Puri V."/>
            <person name="Reese M.G."/>
            <person name="Reinert K."/>
            <person name="Remington K."/>
            <person name="Saunders R.D.C."/>
            <person name="Scheeler F."/>
            <person name="Shen H."/>
            <person name="Shue B.C."/>
            <person name="Siden-Kiamos I."/>
            <person name="Simpson M."/>
            <person name="Skupski M.P."/>
            <person name="Smith T.J."/>
            <person name="Spier E."/>
            <person name="Spradling A.C."/>
            <person name="Stapleton M."/>
            <person name="Strong R."/>
            <person name="Sun E."/>
            <person name="Svirskas R."/>
            <person name="Tector C."/>
            <person name="Turner R."/>
            <person name="Venter E."/>
            <person name="Wang A.H."/>
            <person name="Wang X."/>
            <person name="Wang Z.-Y."/>
            <person name="Wassarman D.A."/>
            <person name="Weinstock G.M."/>
            <person name="Weissenbach J."/>
            <person name="Williams S.M."/>
            <person name="Woodage T."/>
            <person name="Worley K.C."/>
            <person name="Wu D."/>
            <person name="Yang S."/>
            <person name="Yao Q.A."/>
            <person name="Ye J."/>
            <person name="Yeh R.-F."/>
            <person name="Zaveri J.S."/>
            <person name="Zhan M."/>
            <person name="Zhang G."/>
            <person name="Zhao Q."/>
            <person name="Zheng L."/>
            <person name="Zheng X.H."/>
            <person name="Zhong F.N."/>
            <person name="Zhong W."/>
            <person name="Zhou X."/>
            <person name="Zhu S.C."/>
            <person name="Zhu X."/>
            <person name="Smith H.O."/>
            <person name="Gibbs R.A."/>
            <person name="Myers E.W."/>
            <person name="Rubin G.M."/>
            <person name="Venter J.C."/>
        </authorList>
    </citation>
    <scope>NUCLEOTIDE SEQUENCE [LARGE SCALE GENOMIC DNA]</scope>
    <source>
        <strain evidence="3">Berkeley</strain>
    </source>
</reference>
<reference evidence="7 9" key="2">
    <citation type="journal article" date="2002" name="Genome Biol.">
        <title>Annotation of the Drosophila melanogaster euchromatic genome: a systematic review.</title>
        <authorList>
            <person name="Misra S."/>
            <person name="Crosby M.A."/>
            <person name="Mungall C.J."/>
            <person name="Matthews B.B."/>
            <person name="Campbell K.S."/>
            <person name="Hradecky P."/>
            <person name="Huang Y."/>
            <person name="Kaminker J.S."/>
            <person name="Millburn G.H."/>
            <person name="Prochnik S.E."/>
            <person name="Smith C.D."/>
            <person name="Tupy J.L."/>
            <person name="Whitfield E.J."/>
            <person name="Bayraktaroglu L."/>
            <person name="Berman B.P."/>
            <person name="Bettencourt B.R."/>
            <person name="Celniker S.E."/>
            <person name="de Grey A.D.N.J."/>
            <person name="Drysdale R.A."/>
            <person name="Harris N.L."/>
            <person name="Richter J."/>
            <person name="Russo S."/>
            <person name="Schroeder A.J."/>
            <person name="Shu S.Q."/>
            <person name="Stapleton M."/>
            <person name="Yamada C."/>
            <person name="Ashburner M."/>
            <person name="Gelbart W.M."/>
            <person name="Rubin G.M."/>
            <person name="Lewis S.E."/>
        </authorList>
    </citation>
    <scope>GENOME REANNOTATION</scope>
    <source>
        <strain>Berkeley</strain>
    </source>
</reference>
<reference evidence="7 10" key="3">
    <citation type="journal article" date="2002" name="Genome Biol.">
        <title>A Drosophila full-length cDNA resource.</title>
        <authorList>
            <person name="Stapleton M."/>
            <person name="Carlson J.W."/>
            <person name="Brokstein P."/>
            <person name="Yu C."/>
            <person name="Champe M."/>
            <person name="George R.A."/>
            <person name="Guarin H."/>
            <person name="Kronmiller B."/>
            <person name="Pacleb J.M."/>
            <person name="Park S."/>
            <person name="Wan K.H."/>
            <person name="Rubin G.M."/>
            <person name="Celniker S.E."/>
        </authorList>
    </citation>
    <scope>NUCLEOTIDE SEQUENCE [LARGE SCALE MRNA]</scope>
    <source>
        <strain evidence="4">Berkeley</strain>
        <tissue evidence="4">Embryo</tissue>
    </source>
</reference>
<reference evidence="7 8" key="4">
    <citation type="journal article" date="1998" name="Insect Mol. Biol.">
        <title>Chitinases are a multi-gene family in Aedes, Anopheles and Drosophila.</title>
        <authorList>
            <person name="de la Vega H."/>
            <person name="Specht C.A."/>
            <person name="Liu Y."/>
            <person name="Robbins P.W."/>
        </authorList>
    </citation>
    <scope>NUCLEOTIDE SEQUENCE [GENOMIC DNA] OF 50-167</scope>
    <source>
        <strain evidence="8">Canton-S</strain>
    </source>
</reference>
<reference key="5">
    <citation type="journal article" date="2008" name="J. Proteome Res.">
        <title>Phosphoproteome analysis of Drosophila melanogaster embryos.</title>
        <authorList>
            <person name="Zhai B."/>
            <person name="Villen J."/>
            <person name="Beausoleil S.A."/>
            <person name="Mintseris J."/>
            <person name="Gygi S.P."/>
        </authorList>
    </citation>
    <scope>PHOSPHORYLATION [LARGE SCALE ANALYSIS] AT SER-467</scope>
    <scope>IDENTIFICATION BY MASS SPECTROMETRY</scope>
    <source>
        <tissue>Embryo</tissue>
    </source>
</reference>
<accession>Q9W092</accession>
<accession>O17421</accession>
<gene>
    <name evidence="10 11" type="primary">Cht2</name>
    <name type="ORF">CG2054</name>
</gene>
<keyword id="KW-0119">Carbohydrate metabolism</keyword>
<keyword id="KW-0146">Chitin degradation</keyword>
<keyword id="KW-1015">Disulfide bond</keyword>
<keyword id="KW-0326">Glycosidase</keyword>
<keyword id="KW-0378">Hydrolase</keyword>
<keyword id="KW-0597">Phosphoprotein</keyword>
<keyword id="KW-0624">Polysaccharide degradation</keyword>
<keyword id="KW-1185">Reference proteome</keyword>
<keyword id="KW-0732">Signal</keyword>
<proteinExistence type="evidence at protein level"/>
<evidence type="ECO:0000255" key="1"/>
<evidence type="ECO:0000255" key="2">
    <source>
        <dbReference type="PROSITE-ProRule" id="PRU01258"/>
    </source>
</evidence>
<evidence type="ECO:0000269" key="3">
    <source>
    </source>
</evidence>
<evidence type="ECO:0000269" key="4">
    <source>
    </source>
</evidence>
<evidence type="ECO:0000269" key="5">
    <source>
    </source>
</evidence>
<evidence type="ECO:0000303" key="6">
    <source>
    </source>
</evidence>
<evidence type="ECO:0000305" key="7"/>
<evidence type="ECO:0000312" key="8">
    <source>
        <dbReference type="EMBL" id="AAB81859.1"/>
    </source>
</evidence>
<evidence type="ECO:0000312" key="9">
    <source>
        <dbReference type="EMBL" id="AAF47562.1"/>
    </source>
</evidence>
<evidence type="ECO:0000312" key="10">
    <source>
        <dbReference type="EMBL" id="AAL13818.1"/>
    </source>
</evidence>
<evidence type="ECO:0000312" key="11">
    <source>
        <dbReference type="FlyBase" id="FBgn0022702"/>
    </source>
</evidence>
<dbReference type="EC" id="3.2.1.14"/>
<dbReference type="EMBL" id="AE014296">
    <property type="protein sequence ID" value="AAF47562.1"/>
    <property type="molecule type" value="Genomic_DNA"/>
</dbReference>
<dbReference type="EMBL" id="AY058589">
    <property type="protein sequence ID" value="AAL13818.1"/>
    <property type="molecule type" value="mRNA"/>
</dbReference>
<dbReference type="EMBL" id="AF026501">
    <property type="protein sequence ID" value="AAB81859.1"/>
    <property type="molecule type" value="Genomic_DNA"/>
</dbReference>
<dbReference type="RefSeq" id="NP_001246550.1">
    <property type="nucleotide sequence ID" value="NM_001259621.2"/>
</dbReference>
<dbReference type="RefSeq" id="NP_001261282.1">
    <property type="nucleotide sequence ID" value="NM_001274353.1"/>
</dbReference>
<dbReference type="RefSeq" id="NP_477298.2">
    <property type="nucleotide sequence ID" value="NM_057950.4"/>
</dbReference>
<dbReference type="SMR" id="Q9W092"/>
<dbReference type="BioGRID" id="63756">
    <property type="interactions" value="1"/>
</dbReference>
<dbReference type="FunCoup" id="Q9W092">
    <property type="interactions" value="69"/>
</dbReference>
<dbReference type="IntAct" id="Q9W092">
    <property type="interactions" value="1"/>
</dbReference>
<dbReference type="STRING" id="7227.FBpp0297108"/>
<dbReference type="CAZy" id="GH18">
    <property type="family name" value="Glycoside Hydrolase Family 18"/>
</dbReference>
<dbReference type="iPTMnet" id="Q9W092"/>
<dbReference type="PaxDb" id="7227-FBpp0297108"/>
<dbReference type="DNASU" id="38223"/>
<dbReference type="EnsemblMetazoa" id="FBtr0072795">
    <property type="protein sequence ID" value="FBpp0072677"/>
    <property type="gene ID" value="FBgn0022702"/>
</dbReference>
<dbReference type="EnsemblMetazoa" id="FBtr0305966">
    <property type="protein sequence ID" value="FBpp0297108"/>
    <property type="gene ID" value="FBgn0022702"/>
</dbReference>
<dbReference type="EnsemblMetazoa" id="FBtr0334075">
    <property type="protein sequence ID" value="FBpp0306200"/>
    <property type="gene ID" value="FBgn0022702"/>
</dbReference>
<dbReference type="GeneID" id="38223"/>
<dbReference type="KEGG" id="dme:Dmel_CG2054"/>
<dbReference type="AGR" id="FB:FBgn0022702"/>
<dbReference type="CTD" id="38223"/>
<dbReference type="FlyBase" id="FBgn0022702">
    <property type="gene designation" value="Cht2"/>
</dbReference>
<dbReference type="VEuPathDB" id="VectorBase:FBgn0022702"/>
<dbReference type="eggNOG" id="KOG2806">
    <property type="taxonomic scope" value="Eukaryota"/>
</dbReference>
<dbReference type="HOGENOM" id="CLU_002833_3_0_1"/>
<dbReference type="InParanoid" id="Q9W092"/>
<dbReference type="OMA" id="QTQNHIN"/>
<dbReference type="OrthoDB" id="73875at2759"/>
<dbReference type="PhylomeDB" id="Q9W092"/>
<dbReference type="Reactome" id="R-DME-189085">
    <property type="pathway name" value="Digestion of dietary carbohydrate"/>
</dbReference>
<dbReference type="BioGRID-ORCS" id="38223">
    <property type="hits" value="0 hits in 1 CRISPR screen"/>
</dbReference>
<dbReference type="GenomeRNAi" id="38223"/>
<dbReference type="PRO" id="PR:Q9W092"/>
<dbReference type="Proteomes" id="UP000000803">
    <property type="component" value="Chromosome 3L"/>
</dbReference>
<dbReference type="Bgee" id="FBgn0022702">
    <property type="expression patterns" value="Expressed in eye disc (Drosophila) and 62 other cell types or tissues"/>
</dbReference>
<dbReference type="ExpressionAtlas" id="Q9W092">
    <property type="expression patterns" value="baseline and differential"/>
</dbReference>
<dbReference type="GO" id="GO:0098591">
    <property type="term" value="C:external side of apical plasma membrane"/>
    <property type="evidence" value="ECO:0000314"/>
    <property type="project" value="FlyBase"/>
</dbReference>
<dbReference type="GO" id="GO:0005576">
    <property type="term" value="C:extracellular region"/>
    <property type="evidence" value="ECO:0000318"/>
    <property type="project" value="GO_Central"/>
</dbReference>
<dbReference type="GO" id="GO:0005615">
    <property type="term" value="C:extracellular space"/>
    <property type="evidence" value="ECO:0000314"/>
    <property type="project" value="FlyBase"/>
</dbReference>
<dbReference type="GO" id="GO:0008061">
    <property type="term" value="F:chitin binding"/>
    <property type="evidence" value="ECO:0007669"/>
    <property type="project" value="InterPro"/>
</dbReference>
<dbReference type="GO" id="GO:0004568">
    <property type="term" value="F:chitinase activity"/>
    <property type="evidence" value="ECO:0000315"/>
    <property type="project" value="FlyBase"/>
</dbReference>
<dbReference type="GO" id="GO:0008843">
    <property type="term" value="F:endochitinase activity"/>
    <property type="evidence" value="ECO:0007669"/>
    <property type="project" value="UniProtKB-EC"/>
</dbReference>
<dbReference type="GO" id="GO:0006032">
    <property type="term" value="P:chitin catabolic process"/>
    <property type="evidence" value="ECO:0000315"/>
    <property type="project" value="FlyBase"/>
</dbReference>
<dbReference type="GO" id="GO:0040003">
    <property type="term" value="P:chitin-based cuticle development"/>
    <property type="evidence" value="ECO:0000315"/>
    <property type="project" value="FlyBase"/>
</dbReference>
<dbReference type="GO" id="GO:0008362">
    <property type="term" value="P:chitin-based embryonic cuticle biosynthetic process"/>
    <property type="evidence" value="ECO:0000315"/>
    <property type="project" value="FlyBase"/>
</dbReference>
<dbReference type="GO" id="GO:0018990">
    <property type="term" value="P:ecdysis, chitin-based cuticle"/>
    <property type="evidence" value="ECO:0000315"/>
    <property type="project" value="FlyBase"/>
</dbReference>
<dbReference type="GO" id="GO:0008363">
    <property type="term" value="P:larval chitin-based cuticle development"/>
    <property type="evidence" value="ECO:0000315"/>
    <property type="project" value="FlyBase"/>
</dbReference>
<dbReference type="GO" id="GO:0000272">
    <property type="term" value="P:polysaccharide catabolic process"/>
    <property type="evidence" value="ECO:0007669"/>
    <property type="project" value="UniProtKB-KW"/>
</dbReference>
<dbReference type="GO" id="GO:0035151">
    <property type="term" value="P:regulation of tube size, open tracheal system"/>
    <property type="evidence" value="ECO:0000315"/>
    <property type="project" value="FlyBase"/>
</dbReference>
<dbReference type="GO" id="GO:0042060">
    <property type="term" value="P:wound healing"/>
    <property type="evidence" value="ECO:0000315"/>
    <property type="project" value="FlyBase"/>
</dbReference>
<dbReference type="CDD" id="cd02872">
    <property type="entry name" value="GH18_chitolectin_chitotriosidase"/>
    <property type="match status" value="1"/>
</dbReference>
<dbReference type="FunFam" id="3.10.50.10:FF:000013">
    <property type="entry name" value="Probable chitinase 2"/>
    <property type="match status" value="1"/>
</dbReference>
<dbReference type="FunFam" id="3.20.20.80:FF:000097">
    <property type="entry name" value="Probable chitinase 2"/>
    <property type="match status" value="1"/>
</dbReference>
<dbReference type="Gene3D" id="3.10.50.10">
    <property type="match status" value="1"/>
</dbReference>
<dbReference type="Gene3D" id="3.20.20.80">
    <property type="entry name" value="Glycosidases"/>
    <property type="match status" value="1"/>
</dbReference>
<dbReference type="InterPro" id="IPR011583">
    <property type="entry name" value="Chitinase_II/V-like_cat"/>
</dbReference>
<dbReference type="InterPro" id="IPR029070">
    <property type="entry name" value="Chitinase_insertion_sf"/>
</dbReference>
<dbReference type="InterPro" id="IPR001223">
    <property type="entry name" value="Glyco_hydro18_cat"/>
</dbReference>
<dbReference type="InterPro" id="IPR001579">
    <property type="entry name" value="Glyco_hydro_18_chit_AS"/>
</dbReference>
<dbReference type="InterPro" id="IPR017853">
    <property type="entry name" value="Glycoside_hydrolase_SF"/>
</dbReference>
<dbReference type="InterPro" id="IPR050314">
    <property type="entry name" value="Glycosyl_Hydrlase_18"/>
</dbReference>
<dbReference type="PANTHER" id="PTHR11177">
    <property type="entry name" value="CHITINASE"/>
    <property type="match status" value="1"/>
</dbReference>
<dbReference type="PANTHER" id="PTHR11177:SF403">
    <property type="entry name" value="CHITINASE 2-RELATED"/>
    <property type="match status" value="1"/>
</dbReference>
<dbReference type="Pfam" id="PF00704">
    <property type="entry name" value="Glyco_hydro_18"/>
    <property type="match status" value="1"/>
</dbReference>
<dbReference type="SMART" id="SM00636">
    <property type="entry name" value="Glyco_18"/>
    <property type="match status" value="1"/>
</dbReference>
<dbReference type="SUPFAM" id="SSF51445">
    <property type="entry name" value="(Trans)glycosidases"/>
    <property type="match status" value="1"/>
</dbReference>
<dbReference type="SUPFAM" id="SSF54556">
    <property type="entry name" value="Chitinase insertion domain"/>
    <property type="match status" value="1"/>
</dbReference>
<dbReference type="PROSITE" id="PS01095">
    <property type="entry name" value="GH18_1"/>
    <property type="match status" value="1"/>
</dbReference>
<dbReference type="PROSITE" id="PS51910">
    <property type="entry name" value="GH18_2"/>
    <property type="match status" value="1"/>
</dbReference>
<name>CHIT2_DROME</name>
<feature type="signal peptide" evidence="1">
    <location>
        <begin position="1"/>
        <end position="33"/>
    </location>
</feature>
<feature type="chain" id="PRO_0000011948" description="Probable chitinase 2" evidence="1">
    <location>
        <begin position="34"/>
        <end position="484"/>
    </location>
</feature>
<feature type="domain" description="GH18" evidence="2">
    <location>
        <begin position="41"/>
        <end position="432"/>
    </location>
</feature>
<feature type="active site" description="Proton donor" evidence="2">
    <location>
        <position position="168"/>
    </location>
</feature>
<feature type="binding site" evidence="2">
    <location>
        <begin position="98"/>
        <end position="99"/>
    </location>
    <ligand>
        <name>chitin</name>
        <dbReference type="ChEBI" id="CHEBI:17029"/>
    </ligand>
</feature>
<feature type="binding site" evidence="2">
    <location>
        <begin position="125"/>
        <end position="128"/>
    </location>
    <ligand>
        <name>chitin</name>
        <dbReference type="ChEBI" id="CHEBI:17029"/>
    </ligand>
</feature>
<feature type="binding site" evidence="2">
    <location>
        <position position="169"/>
    </location>
    <ligand>
        <name>chitin</name>
        <dbReference type="ChEBI" id="CHEBI:17029"/>
    </ligand>
</feature>
<feature type="binding site" evidence="2">
    <location>
        <begin position="231"/>
        <end position="234"/>
    </location>
    <ligand>
        <name>chitin</name>
        <dbReference type="ChEBI" id="CHEBI:17029"/>
    </ligand>
</feature>
<feature type="binding site" evidence="2">
    <location>
        <position position="384"/>
    </location>
    <ligand>
        <name>chitin</name>
        <dbReference type="ChEBI" id="CHEBI:17029"/>
    </ligand>
</feature>
<feature type="modified residue" description="Phosphoserine" evidence="5">
    <location>
        <position position="467"/>
    </location>
</feature>
<feature type="disulfide bond" evidence="2">
    <location>
        <begin position="45"/>
        <end position="70"/>
    </location>
</feature>
<protein>
    <recommendedName>
        <fullName>Probable chitinase 2</fullName>
        <ecNumber>3.2.1.14</ecNumber>
    </recommendedName>
</protein>
<sequence length="484" mass="54122">MTLRSRLSGEAPQLWLLLLLASTASSLWASVAARTGPLHDKVVVCYVSTWAVYRPEQGAYAIENFDPNLCTHVVYAFAGLDITQAAIKSLDPWQDLKEEYGKGGYEKMTGLKRSHPHLKVSLAIGGWNEGSANYSTLVANNLLRGRFVKQVSSFIRKYNFDGLDLDWEYPTQRKGKPADRENFVLLTKELREEFDEHGLLLTSAIGASKKVIDEAYDVRQISRYLDYLHIMCYDYHGSWDRRVGYNAPLTAPADDPLSVKFSIDYLLKLGAPPEKLVMGLPFYGRTFKTLASGFLNDVSEGVGFKGPYTREDGFLGYNEICQTLSNQTSGWTREWDPQTSQVLAKSERNVFTQEINVVTYDSSRSIANKVLFAMSKRLAGVMVWSVDTDDFLGNCKLDEDTYEDFQKVTAAPKRSSQNYPLLRTINEATMLAVDELAVPEPQPDDSENEIPHGSIADRKNAGASMVSLGLGVTAVFMLLHRLAQ</sequence>